<sequence>MSVIDLPEFFYKAILLLIESGVILGSLGVVLFTNIVYSAFLLGWVPVCISFLYILLNADFVAAVQILIYVGTINVLIVFAVMLINKPQYFRFLKYWTVGDGTALALCTSPFLSIIAAILSTPWSKISLIVLSNKIVEEPLTDNVQRIGFHSLTDSPLPFELLSIILLVAPVGAITMARREEAVEAEESEALKTKDDFPF</sequence>
<gene>
    <name type="primary">ndhG</name>
</gene>
<organism>
    <name type="scientific">Huperzia lucidula</name>
    <name type="common">Shining clubmoss</name>
    <name type="synonym">Lycopodium lucidulum</name>
    <dbReference type="NCBI Taxonomy" id="37429"/>
    <lineage>
        <taxon>Eukaryota</taxon>
        <taxon>Viridiplantae</taxon>
        <taxon>Streptophyta</taxon>
        <taxon>Embryophyta</taxon>
        <taxon>Tracheophyta</taxon>
        <taxon>Lycopodiopsida</taxon>
        <taxon>Lycopodiales</taxon>
        <taxon>Lycopodiaceae</taxon>
        <taxon>Huperzioideae</taxon>
        <taxon>Huperzia</taxon>
    </lineage>
</organism>
<proteinExistence type="inferred from homology"/>
<name>NU6C_HUPLU</name>
<geneLocation type="chloroplast"/>
<evidence type="ECO:0000250" key="1"/>
<evidence type="ECO:0000255" key="2"/>
<evidence type="ECO:0000305" key="3"/>
<dbReference type="EC" id="7.1.1.-"/>
<dbReference type="EMBL" id="AY660566">
    <property type="protein sequence ID" value="AAT80760.1"/>
    <property type="molecule type" value="Genomic_DNA"/>
</dbReference>
<dbReference type="RefSeq" id="YP_209564.2">
    <property type="nucleotide sequence ID" value="NC_006861.1"/>
</dbReference>
<dbReference type="SMR" id="Q5SCZ0"/>
<dbReference type="GeneID" id="3283711"/>
<dbReference type="GO" id="GO:0009535">
    <property type="term" value="C:chloroplast thylakoid membrane"/>
    <property type="evidence" value="ECO:0007669"/>
    <property type="project" value="UniProtKB-SubCell"/>
</dbReference>
<dbReference type="GO" id="GO:0008137">
    <property type="term" value="F:NADH dehydrogenase (ubiquinone) activity"/>
    <property type="evidence" value="ECO:0007669"/>
    <property type="project" value="InterPro"/>
</dbReference>
<dbReference type="GO" id="GO:0048038">
    <property type="term" value="F:quinone binding"/>
    <property type="evidence" value="ECO:0007669"/>
    <property type="project" value="UniProtKB-KW"/>
</dbReference>
<dbReference type="FunFam" id="1.20.120.1200:FF:000002">
    <property type="entry name" value="NAD(P)H-quinone oxidoreductase subunit 6, chloroplastic"/>
    <property type="match status" value="1"/>
</dbReference>
<dbReference type="Gene3D" id="1.20.120.1200">
    <property type="entry name" value="NADH-ubiquinone/plastoquinone oxidoreductase chain 6, subunit NuoJ"/>
    <property type="match status" value="1"/>
</dbReference>
<dbReference type="InterPro" id="IPR050290">
    <property type="entry name" value="NAD(P)H-Q_Oxidoreduct_6"/>
</dbReference>
<dbReference type="InterPro" id="IPR001457">
    <property type="entry name" value="NADH_UbQ/plastoQ_OxRdtase_su6"/>
</dbReference>
<dbReference type="InterPro" id="IPR042106">
    <property type="entry name" value="Nuo/plastoQ_OxRdtase_6_NuoJ"/>
</dbReference>
<dbReference type="PANTHER" id="PTHR48479">
    <property type="entry name" value="NAD(P)H-QUINONE OXIDOREDUCTASE SUBUNIT 6, CHLOROPLASTIC"/>
    <property type="match status" value="1"/>
</dbReference>
<dbReference type="PANTHER" id="PTHR48479:SF1">
    <property type="entry name" value="NAD(P)H-QUINONE OXIDOREDUCTASE SUBUNIT 6, CHLOROPLASTIC"/>
    <property type="match status" value="1"/>
</dbReference>
<dbReference type="Pfam" id="PF00499">
    <property type="entry name" value="Oxidored_q3"/>
    <property type="match status" value="1"/>
</dbReference>
<reference key="1">
    <citation type="journal article" date="2005" name="Gene">
        <title>The first complete chloroplast genome sequence of a lycophyte, Huperzia lucidula (Lycopodiaceae).</title>
        <authorList>
            <person name="Wolf P.G."/>
            <person name="Karol K.G."/>
            <person name="Mandoli D.F."/>
            <person name="Kuehl J.V."/>
            <person name="Arumuganathan K."/>
            <person name="Ellis M.W."/>
            <person name="Mishler B.D."/>
            <person name="Kelch D.G."/>
            <person name="Olmstead R.G."/>
            <person name="Boore J.L."/>
        </authorList>
    </citation>
    <scope>NUCLEOTIDE SEQUENCE [LARGE SCALE GENOMIC DNA]</scope>
</reference>
<keyword id="KW-0150">Chloroplast</keyword>
<keyword id="KW-0472">Membrane</keyword>
<keyword id="KW-0520">NAD</keyword>
<keyword id="KW-0521">NADP</keyword>
<keyword id="KW-0934">Plastid</keyword>
<keyword id="KW-0618">Plastoquinone</keyword>
<keyword id="KW-0874">Quinone</keyword>
<keyword id="KW-0793">Thylakoid</keyword>
<keyword id="KW-1278">Translocase</keyword>
<keyword id="KW-0812">Transmembrane</keyword>
<keyword id="KW-1133">Transmembrane helix</keyword>
<keyword id="KW-0813">Transport</keyword>
<feature type="chain" id="PRO_0000360258" description="NAD(P)H-quinone oxidoreductase subunit 6, chloroplastic">
    <location>
        <begin position="1"/>
        <end position="199"/>
    </location>
</feature>
<feature type="transmembrane region" description="Helical" evidence="2">
    <location>
        <begin position="13"/>
        <end position="33"/>
    </location>
</feature>
<feature type="transmembrane region" description="Helical" evidence="2">
    <location>
        <begin position="35"/>
        <end position="55"/>
    </location>
</feature>
<feature type="transmembrane region" description="Helical" evidence="2">
    <location>
        <begin position="64"/>
        <end position="84"/>
    </location>
</feature>
<feature type="transmembrane region" description="Helical" evidence="2">
    <location>
        <begin position="96"/>
        <end position="118"/>
    </location>
</feature>
<feature type="transmembrane region" description="Helical" evidence="2">
    <location>
        <begin position="157"/>
        <end position="177"/>
    </location>
</feature>
<protein>
    <recommendedName>
        <fullName>NAD(P)H-quinone oxidoreductase subunit 6, chloroplastic</fullName>
        <ecNumber>7.1.1.-</ecNumber>
    </recommendedName>
    <alternativeName>
        <fullName>NAD(P)H dehydrogenase subunit 6</fullName>
    </alternativeName>
    <alternativeName>
        <fullName>NADH-plastoquinone oxidoreductase subunit 6</fullName>
    </alternativeName>
</protein>
<comment type="function">
    <text evidence="1">NDH shuttles electrons from NAD(P)H:plastoquinone, via FMN and iron-sulfur (Fe-S) centers, to quinones in the photosynthetic chain and possibly in a chloroplast respiratory chain. The immediate electron acceptor for the enzyme in this species is believed to be plastoquinone. Couples the redox reaction to proton translocation, and thus conserves the redox energy in a proton gradient (By similarity).</text>
</comment>
<comment type="catalytic activity">
    <reaction>
        <text>a plastoquinone + NADH + (n+1) H(+)(in) = a plastoquinol + NAD(+) + n H(+)(out)</text>
        <dbReference type="Rhea" id="RHEA:42608"/>
        <dbReference type="Rhea" id="RHEA-COMP:9561"/>
        <dbReference type="Rhea" id="RHEA-COMP:9562"/>
        <dbReference type="ChEBI" id="CHEBI:15378"/>
        <dbReference type="ChEBI" id="CHEBI:17757"/>
        <dbReference type="ChEBI" id="CHEBI:57540"/>
        <dbReference type="ChEBI" id="CHEBI:57945"/>
        <dbReference type="ChEBI" id="CHEBI:62192"/>
    </reaction>
</comment>
<comment type="catalytic activity">
    <reaction>
        <text>a plastoquinone + NADPH + (n+1) H(+)(in) = a plastoquinol + NADP(+) + n H(+)(out)</text>
        <dbReference type="Rhea" id="RHEA:42612"/>
        <dbReference type="Rhea" id="RHEA-COMP:9561"/>
        <dbReference type="Rhea" id="RHEA-COMP:9562"/>
        <dbReference type="ChEBI" id="CHEBI:15378"/>
        <dbReference type="ChEBI" id="CHEBI:17757"/>
        <dbReference type="ChEBI" id="CHEBI:57783"/>
        <dbReference type="ChEBI" id="CHEBI:58349"/>
        <dbReference type="ChEBI" id="CHEBI:62192"/>
    </reaction>
</comment>
<comment type="subunit">
    <text evidence="1">NDH is composed of at least 16 different subunits, 5 of which are encoded in the nucleus.</text>
</comment>
<comment type="subcellular location">
    <subcellularLocation>
        <location evidence="1">Plastid</location>
        <location evidence="1">Chloroplast thylakoid membrane</location>
        <topology evidence="1">Multi-pass membrane protein</topology>
    </subcellularLocation>
</comment>
<comment type="similarity">
    <text evidence="3">Belongs to the complex I subunit 6 family.</text>
</comment>
<accession>Q5SCZ0</accession>